<evidence type="ECO:0000250" key="1"/>
<evidence type="ECO:0000250" key="2">
    <source>
        <dbReference type="UniProtKB" id="P29474"/>
    </source>
</evidence>
<evidence type="ECO:0000255" key="3"/>
<evidence type="ECO:0000255" key="4">
    <source>
        <dbReference type="PROSITE-ProRule" id="PRU00088"/>
    </source>
</evidence>
<evidence type="ECO:0000255" key="5">
    <source>
        <dbReference type="PROSITE-ProRule" id="PRU00716"/>
    </source>
</evidence>
<evidence type="ECO:0000256" key="6">
    <source>
        <dbReference type="SAM" id="MobiDB-lite"/>
    </source>
</evidence>
<evidence type="ECO:0000269" key="7">
    <source>
    </source>
</evidence>
<evidence type="ECO:0000269" key="8">
    <source>
    </source>
</evidence>
<evidence type="ECO:0000269" key="9">
    <source>
    </source>
</evidence>
<evidence type="ECO:0000303" key="10">
    <source>
    </source>
</evidence>
<evidence type="ECO:0000303" key="11">
    <source>
    </source>
</evidence>
<evidence type="ECO:0000305" key="12"/>
<evidence type="ECO:0000305" key="13">
    <source>
    </source>
</evidence>
<evidence type="ECO:0000312" key="14">
    <source>
        <dbReference type="FlyBase" id="FBgn0011676"/>
    </source>
</evidence>
<gene>
    <name type="primary">Nos</name>
    <name type="ORF">CG6713</name>
</gene>
<proteinExistence type="evidence at protein level"/>
<dbReference type="EC" id="1.14.13.39" evidence="9 13"/>
<dbReference type="EMBL" id="U25117">
    <property type="protein sequence ID" value="AAC46882.1"/>
    <property type="molecule type" value="mRNA"/>
</dbReference>
<dbReference type="EMBL" id="AF215700">
    <property type="protein sequence ID" value="AAF25682.1"/>
    <property type="molecule type" value="Genomic_DNA"/>
</dbReference>
<dbReference type="EMBL" id="AF215691">
    <property type="protein sequence ID" value="AAF25682.1"/>
    <property type="status" value="JOINED"/>
    <property type="molecule type" value="Genomic_DNA"/>
</dbReference>
<dbReference type="EMBL" id="AF215692">
    <property type="protein sequence ID" value="AAF25682.1"/>
    <property type="status" value="JOINED"/>
    <property type="molecule type" value="Genomic_DNA"/>
</dbReference>
<dbReference type="EMBL" id="AF215693">
    <property type="protein sequence ID" value="AAF25682.1"/>
    <property type="status" value="JOINED"/>
    <property type="molecule type" value="Genomic_DNA"/>
</dbReference>
<dbReference type="EMBL" id="AF215694">
    <property type="protein sequence ID" value="AAF25682.1"/>
    <property type="status" value="JOINED"/>
    <property type="molecule type" value="Genomic_DNA"/>
</dbReference>
<dbReference type="EMBL" id="AF215695">
    <property type="protein sequence ID" value="AAF25682.1"/>
    <property type="status" value="JOINED"/>
    <property type="molecule type" value="Genomic_DNA"/>
</dbReference>
<dbReference type="EMBL" id="AF215696">
    <property type="protein sequence ID" value="AAF25682.1"/>
    <property type="status" value="JOINED"/>
    <property type="molecule type" value="Genomic_DNA"/>
</dbReference>
<dbReference type="EMBL" id="AF215697">
    <property type="protein sequence ID" value="AAF25682.1"/>
    <property type="status" value="JOINED"/>
    <property type="molecule type" value="Genomic_DNA"/>
</dbReference>
<dbReference type="EMBL" id="AF215698">
    <property type="protein sequence ID" value="AAF25682.1"/>
    <property type="status" value="JOINED"/>
    <property type="molecule type" value="Genomic_DNA"/>
</dbReference>
<dbReference type="EMBL" id="AF215699">
    <property type="protein sequence ID" value="AAF25682.1"/>
    <property type="status" value="JOINED"/>
    <property type="molecule type" value="Genomic_DNA"/>
</dbReference>
<dbReference type="EMBL" id="AE014134">
    <property type="protein sequence ID" value="AAF53014.1"/>
    <property type="molecule type" value="Genomic_DNA"/>
</dbReference>
<dbReference type="EMBL" id="AE014134">
    <property type="protein sequence ID" value="AAZ66450.1"/>
    <property type="molecule type" value="Genomic_DNA"/>
</dbReference>
<dbReference type="EMBL" id="AE014134">
    <property type="protein sequence ID" value="AAZ66451.1"/>
    <property type="molecule type" value="Genomic_DNA"/>
</dbReference>
<dbReference type="EMBL" id="AE014134">
    <property type="protein sequence ID" value="AAZ66452.2"/>
    <property type="status" value="ALT_SEQ"/>
    <property type="molecule type" value="Genomic_DNA"/>
</dbReference>
<dbReference type="EMBL" id="AE014134">
    <property type="protein sequence ID" value="AAZ66453.1"/>
    <property type="molecule type" value="Genomic_DNA"/>
</dbReference>
<dbReference type="EMBL" id="AE014134">
    <property type="protein sequence ID" value="AAZ66454.1"/>
    <property type="molecule type" value="Genomic_DNA"/>
</dbReference>
<dbReference type="EMBL" id="AE014134">
    <property type="protein sequence ID" value="AAZ66455.1"/>
    <property type="molecule type" value="Genomic_DNA"/>
</dbReference>
<dbReference type="EMBL" id="AE014134">
    <property type="protein sequence ID" value="AAZ66456.1"/>
    <property type="molecule type" value="Genomic_DNA"/>
</dbReference>
<dbReference type="EMBL" id="AE014134">
    <property type="protein sequence ID" value="AAZ66457.1"/>
    <property type="molecule type" value="Genomic_DNA"/>
</dbReference>
<dbReference type="EMBL" id="BT010016">
    <property type="protein sequence ID" value="AAQ22485.1"/>
    <property type="molecule type" value="mRNA"/>
</dbReference>
<dbReference type="PIR" id="T13254">
    <property type="entry name" value="T13254"/>
</dbReference>
<dbReference type="RefSeq" id="NP_001027240.1">
    <molecule id="Q27571-4"/>
    <property type="nucleotide sequence ID" value="NM_001032069.2"/>
</dbReference>
<dbReference type="RefSeq" id="NP_001027243.2">
    <property type="nucleotide sequence ID" value="NM_001032072.2"/>
</dbReference>
<dbReference type="RefSeq" id="NP_523541.2">
    <molecule id="Q27571-1"/>
    <property type="nucleotide sequence ID" value="NM_078817.4"/>
</dbReference>
<dbReference type="SMR" id="Q27571"/>
<dbReference type="BioGRID" id="60568">
    <property type="interactions" value="5"/>
</dbReference>
<dbReference type="FunCoup" id="Q27571">
    <property type="interactions" value="288"/>
</dbReference>
<dbReference type="IntAct" id="Q27571">
    <property type="interactions" value="2"/>
</dbReference>
<dbReference type="STRING" id="7227.FBpp0079777"/>
<dbReference type="PaxDb" id="7227-FBpp0099922"/>
<dbReference type="EnsemblMetazoa" id="FBtr0080188">
    <molecule id="Q27571-1"/>
    <property type="protein sequence ID" value="FBpp0079777"/>
    <property type="gene ID" value="FBgn0011676"/>
</dbReference>
<dbReference type="EnsemblMetazoa" id="FBtr0100489">
    <molecule id="Q27571-4"/>
    <property type="protein sequence ID" value="FBpp0099926"/>
    <property type="gene ID" value="FBgn0011676"/>
</dbReference>
<dbReference type="GeneID" id="34495"/>
<dbReference type="KEGG" id="dme:Dmel_CG6713"/>
<dbReference type="AGR" id="FB:FBgn0011676"/>
<dbReference type="CTD" id="34495"/>
<dbReference type="FlyBase" id="FBgn0011676">
    <property type="gene designation" value="Nos"/>
</dbReference>
<dbReference type="VEuPathDB" id="VectorBase:FBgn0011676"/>
<dbReference type="eggNOG" id="KOG1158">
    <property type="taxonomic scope" value="Eukaryota"/>
</dbReference>
<dbReference type="GeneTree" id="ENSGT00940000168337"/>
<dbReference type="InParanoid" id="Q27571"/>
<dbReference type="OMA" id="MQLPTHG"/>
<dbReference type="OrthoDB" id="1688044at2759"/>
<dbReference type="PhylomeDB" id="Q27571"/>
<dbReference type="Reactome" id="R-DME-1222556">
    <property type="pathway name" value="ROS and RNS production in phagocytes"/>
</dbReference>
<dbReference type="Reactome" id="R-DME-1474151">
    <property type="pathway name" value="Tetrahydrobiopterin (BH4) synthesis, recycling, salvage and regulation"/>
</dbReference>
<dbReference type="Reactome" id="R-DME-203615">
    <property type="pathway name" value="eNOS activation"/>
</dbReference>
<dbReference type="Reactome" id="R-DME-203754">
    <property type="pathway name" value="NOSIP mediated eNOS trafficking"/>
</dbReference>
<dbReference type="Reactome" id="R-DME-392154">
    <property type="pathway name" value="Nitric oxide stimulates guanylate cyclase"/>
</dbReference>
<dbReference type="Reactome" id="R-DME-5218920">
    <property type="pathway name" value="VEGFR2 mediated vascular permeability"/>
</dbReference>
<dbReference type="Reactome" id="R-DME-5578775">
    <property type="pathway name" value="Ion homeostasis"/>
</dbReference>
<dbReference type="Reactome" id="R-DME-9009391">
    <property type="pathway name" value="Extra-nuclear estrogen signaling"/>
</dbReference>
<dbReference type="Reactome" id="R-DME-9033241">
    <property type="pathway name" value="Peroxisomal protein import"/>
</dbReference>
<dbReference type="Reactome" id="R-DME-9856530">
    <property type="pathway name" value="High laminar flow shear stress activates signaling by PIEZO1 and PECAM1:CDH5:KDR in endothelial cells"/>
</dbReference>
<dbReference type="GenomeRNAi" id="34495"/>
<dbReference type="PRO" id="PR:Q27571"/>
<dbReference type="Proteomes" id="UP000000803">
    <property type="component" value="Chromosome 2L"/>
</dbReference>
<dbReference type="Bgee" id="FBgn0011676">
    <property type="expression patterns" value="Expressed in centrifugal neuron C3 (Drosophila) in insect head and 69 other cell types or tissues"/>
</dbReference>
<dbReference type="GO" id="GO:0005829">
    <property type="term" value="C:cytosol"/>
    <property type="evidence" value="ECO:0000318"/>
    <property type="project" value="GO_Central"/>
</dbReference>
<dbReference type="GO" id="GO:0005634">
    <property type="term" value="C:nucleus"/>
    <property type="evidence" value="ECO:0000318"/>
    <property type="project" value="GO_Central"/>
</dbReference>
<dbReference type="GO" id="GO:0005777">
    <property type="term" value="C:peroxisome"/>
    <property type="evidence" value="ECO:0000250"/>
    <property type="project" value="FlyBase"/>
</dbReference>
<dbReference type="GO" id="GO:0005886">
    <property type="term" value="C:plasma membrane"/>
    <property type="evidence" value="ECO:0000318"/>
    <property type="project" value="GO_Central"/>
</dbReference>
<dbReference type="GO" id="GO:0005516">
    <property type="term" value="F:calmodulin binding"/>
    <property type="evidence" value="ECO:0000303"/>
    <property type="project" value="FlyBase"/>
</dbReference>
<dbReference type="GO" id="GO:0050660">
    <property type="term" value="F:flavin adenine dinucleotide binding"/>
    <property type="evidence" value="ECO:0000318"/>
    <property type="project" value="GO_Central"/>
</dbReference>
<dbReference type="GO" id="GO:0010181">
    <property type="term" value="F:FMN binding"/>
    <property type="evidence" value="ECO:0000318"/>
    <property type="project" value="GO_Central"/>
</dbReference>
<dbReference type="GO" id="GO:0020037">
    <property type="term" value="F:heme binding"/>
    <property type="evidence" value="ECO:0000303"/>
    <property type="project" value="FlyBase"/>
</dbReference>
<dbReference type="GO" id="GO:0046872">
    <property type="term" value="F:metal ion binding"/>
    <property type="evidence" value="ECO:0007669"/>
    <property type="project" value="UniProtKB-KW"/>
</dbReference>
<dbReference type="GO" id="GO:0050661">
    <property type="term" value="F:NADP binding"/>
    <property type="evidence" value="ECO:0007669"/>
    <property type="project" value="InterPro"/>
</dbReference>
<dbReference type="GO" id="GO:0004517">
    <property type="term" value="F:nitric-oxide synthase activity"/>
    <property type="evidence" value="ECO:0000314"/>
    <property type="project" value="FlyBase"/>
</dbReference>
<dbReference type="GO" id="GO:0006527">
    <property type="term" value="P:arginine catabolic process"/>
    <property type="evidence" value="ECO:0000318"/>
    <property type="project" value="GO_Central"/>
</dbReference>
<dbReference type="GO" id="GO:0007444">
    <property type="term" value="P:imaginal disc development"/>
    <property type="evidence" value="ECO:0000304"/>
    <property type="project" value="FlyBase"/>
</dbReference>
<dbReference type="GO" id="GO:0008285">
    <property type="term" value="P:negative regulation of cell population proliferation"/>
    <property type="evidence" value="ECO:0000304"/>
    <property type="project" value="FlyBase"/>
</dbReference>
<dbReference type="GO" id="GO:0008156">
    <property type="term" value="P:negative regulation of DNA replication"/>
    <property type="evidence" value="ECO:0000304"/>
    <property type="project" value="FlyBase"/>
</dbReference>
<dbReference type="GO" id="GO:0007399">
    <property type="term" value="P:nervous system development"/>
    <property type="evidence" value="ECO:0000315"/>
    <property type="project" value="FlyBase"/>
</dbReference>
<dbReference type="GO" id="GO:0006809">
    <property type="term" value="P:nitric oxide biosynthetic process"/>
    <property type="evidence" value="ECO:0000315"/>
    <property type="project" value="FlyBase"/>
</dbReference>
<dbReference type="GO" id="GO:0007263">
    <property type="term" value="P:nitric oxide mediated signal transduction"/>
    <property type="evidence" value="ECO:0000318"/>
    <property type="project" value="GO_Central"/>
</dbReference>
<dbReference type="GO" id="GO:0002027">
    <property type="term" value="P:regulation of heart rate"/>
    <property type="evidence" value="ECO:0000315"/>
    <property type="project" value="FlyBase"/>
</dbReference>
<dbReference type="GO" id="GO:0046620">
    <property type="term" value="P:regulation of organ growth"/>
    <property type="evidence" value="ECO:0000304"/>
    <property type="project" value="FlyBase"/>
</dbReference>
<dbReference type="GO" id="GO:0140460">
    <property type="term" value="P:response to Gram-negative bacterium"/>
    <property type="evidence" value="ECO:0000315"/>
    <property type="project" value="FlyBase"/>
</dbReference>
<dbReference type="GO" id="GO:0009725">
    <property type="term" value="P:response to hormone"/>
    <property type="evidence" value="ECO:0000318"/>
    <property type="project" value="GO_Central"/>
</dbReference>
<dbReference type="GO" id="GO:0032496">
    <property type="term" value="P:response to lipopolysaccharide"/>
    <property type="evidence" value="ECO:0000318"/>
    <property type="project" value="GO_Central"/>
</dbReference>
<dbReference type="GO" id="GO:0007416">
    <property type="term" value="P:synapse assembly"/>
    <property type="evidence" value="ECO:0000304"/>
    <property type="project" value="FlyBase"/>
</dbReference>
<dbReference type="CDD" id="cd06202">
    <property type="entry name" value="Nitric_oxide_synthase"/>
    <property type="match status" value="1"/>
</dbReference>
<dbReference type="CDD" id="cd00795">
    <property type="entry name" value="NOS_oxygenase_euk"/>
    <property type="match status" value="1"/>
</dbReference>
<dbReference type="FunFam" id="3.90.440.10:FF:000001">
    <property type="entry name" value="Endothelial nitric oxide synthase"/>
    <property type="match status" value="1"/>
</dbReference>
<dbReference type="FunFam" id="1.20.990.10:FF:000002">
    <property type="entry name" value="Nitric oxide synthase"/>
    <property type="match status" value="1"/>
</dbReference>
<dbReference type="FunFam" id="3.40.50.360:FF:000033">
    <property type="entry name" value="Nitric oxide synthase"/>
    <property type="match status" value="1"/>
</dbReference>
<dbReference type="FunFam" id="3.40.50.80:FF:000003">
    <property type="entry name" value="Nitric oxide synthase"/>
    <property type="match status" value="1"/>
</dbReference>
<dbReference type="Gene3D" id="3.40.50.360">
    <property type="match status" value="1"/>
</dbReference>
<dbReference type="Gene3D" id="1.20.990.10">
    <property type="entry name" value="NADPH-cytochrome p450 Reductase, Chain A, domain 3"/>
    <property type="match status" value="1"/>
</dbReference>
<dbReference type="Gene3D" id="3.90.340.10">
    <property type="entry name" value="Nitric Oxide Synthase, Chain A, domain 1"/>
    <property type="match status" value="1"/>
</dbReference>
<dbReference type="Gene3D" id="3.90.1230.10">
    <property type="entry name" value="Nitric Oxide Synthase, Chain A, domain 3"/>
    <property type="match status" value="1"/>
</dbReference>
<dbReference type="Gene3D" id="3.90.440.10">
    <property type="entry name" value="Nitric Oxide Synthase,Heme Domain,Chain A domain 2"/>
    <property type="match status" value="1"/>
</dbReference>
<dbReference type="Gene3D" id="3.40.50.80">
    <property type="entry name" value="Nucleotide-binding domain of ferredoxin-NADP reductase (FNR) module"/>
    <property type="match status" value="1"/>
</dbReference>
<dbReference type="Gene3D" id="2.40.30.10">
    <property type="entry name" value="Translation factors"/>
    <property type="match status" value="1"/>
</dbReference>
<dbReference type="InterPro" id="IPR003097">
    <property type="entry name" value="CysJ-like_FAD-binding"/>
</dbReference>
<dbReference type="InterPro" id="IPR017927">
    <property type="entry name" value="FAD-bd_FR_type"/>
</dbReference>
<dbReference type="InterPro" id="IPR001094">
    <property type="entry name" value="Flavdoxin-like"/>
</dbReference>
<dbReference type="InterPro" id="IPR008254">
    <property type="entry name" value="Flavodoxin/NO_synth"/>
</dbReference>
<dbReference type="InterPro" id="IPR001709">
    <property type="entry name" value="Flavoprot_Pyr_Nucl_cyt_Rdtase"/>
</dbReference>
<dbReference type="InterPro" id="IPR029039">
    <property type="entry name" value="Flavoprotein-like_sf"/>
</dbReference>
<dbReference type="InterPro" id="IPR039261">
    <property type="entry name" value="FNR_nucleotide-bd"/>
</dbReference>
<dbReference type="InterPro" id="IPR023173">
    <property type="entry name" value="NADPH_Cyt_P450_Rdtase_alpha"/>
</dbReference>
<dbReference type="InterPro" id="IPR050607">
    <property type="entry name" value="NOS"/>
</dbReference>
<dbReference type="InterPro" id="IPR044943">
    <property type="entry name" value="NOS_dom_1"/>
</dbReference>
<dbReference type="InterPro" id="IPR044940">
    <property type="entry name" value="NOS_dom_2"/>
</dbReference>
<dbReference type="InterPro" id="IPR044944">
    <property type="entry name" value="NOS_dom_3"/>
</dbReference>
<dbReference type="InterPro" id="IPR012144">
    <property type="entry name" value="NOS_euk"/>
</dbReference>
<dbReference type="InterPro" id="IPR004030">
    <property type="entry name" value="NOS_N"/>
</dbReference>
<dbReference type="InterPro" id="IPR036119">
    <property type="entry name" value="NOS_N_sf"/>
</dbReference>
<dbReference type="InterPro" id="IPR001433">
    <property type="entry name" value="OxRdtase_FAD/NAD-bd"/>
</dbReference>
<dbReference type="InterPro" id="IPR017938">
    <property type="entry name" value="Riboflavin_synthase-like_b-brl"/>
</dbReference>
<dbReference type="PANTHER" id="PTHR43410:SF1">
    <property type="entry name" value="NITRIC OXIDE SYNTHASE"/>
    <property type="match status" value="1"/>
</dbReference>
<dbReference type="PANTHER" id="PTHR43410">
    <property type="entry name" value="NITRIC OXIDE SYNTHASE OXYGENASE"/>
    <property type="match status" value="1"/>
</dbReference>
<dbReference type="Pfam" id="PF00667">
    <property type="entry name" value="FAD_binding_1"/>
    <property type="match status" value="1"/>
</dbReference>
<dbReference type="Pfam" id="PF00258">
    <property type="entry name" value="Flavodoxin_1"/>
    <property type="match status" value="1"/>
</dbReference>
<dbReference type="Pfam" id="PF00175">
    <property type="entry name" value="NAD_binding_1"/>
    <property type="match status" value="1"/>
</dbReference>
<dbReference type="Pfam" id="PF02898">
    <property type="entry name" value="NO_synthase"/>
    <property type="match status" value="1"/>
</dbReference>
<dbReference type="PIRSF" id="PIRSF000333">
    <property type="entry name" value="NOS"/>
    <property type="match status" value="1"/>
</dbReference>
<dbReference type="PRINTS" id="PR00369">
    <property type="entry name" value="FLAVODOXIN"/>
</dbReference>
<dbReference type="PRINTS" id="PR00371">
    <property type="entry name" value="FPNCR"/>
</dbReference>
<dbReference type="SUPFAM" id="SSF52343">
    <property type="entry name" value="Ferredoxin reductase-like, C-terminal NADP-linked domain"/>
    <property type="match status" value="1"/>
</dbReference>
<dbReference type="SUPFAM" id="SSF52218">
    <property type="entry name" value="Flavoproteins"/>
    <property type="match status" value="1"/>
</dbReference>
<dbReference type="SUPFAM" id="SSF56512">
    <property type="entry name" value="Nitric oxide (NO) synthase oxygenase domain"/>
    <property type="match status" value="1"/>
</dbReference>
<dbReference type="SUPFAM" id="SSF63380">
    <property type="entry name" value="Riboflavin synthase domain-like"/>
    <property type="match status" value="1"/>
</dbReference>
<dbReference type="PROSITE" id="PS51384">
    <property type="entry name" value="FAD_FR"/>
    <property type="match status" value="1"/>
</dbReference>
<dbReference type="PROSITE" id="PS50902">
    <property type="entry name" value="FLAVODOXIN_LIKE"/>
    <property type="match status" value="1"/>
</dbReference>
<dbReference type="PROSITE" id="PS60001">
    <property type="entry name" value="NOS"/>
    <property type="match status" value="1"/>
</dbReference>
<organism>
    <name type="scientific">Drosophila melanogaster</name>
    <name type="common">Fruit fly</name>
    <dbReference type="NCBI Taxonomy" id="7227"/>
    <lineage>
        <taxon>Eukaryota</taxon>
        <taxon>Metazoa</taxon>
        <taxon>Ecdysozoa</taxon>
        <taxon>Arthropoda</taxon>
        <taxon>Hexapoda</taxon>
        <taxon>Insecta</taxon>
        <taxon>Pterygota</taxon>
        <taxon>Neoptera</taxon>
        <taxon>Endopterygota</taxon>
        <taxon>Diptera</taxon>
        <taxon>Brachycera</taxon>
        <taxon>Muscomorpha</taxon>
        <taxon>Ephydroidea</taxon>
        <taxon>Drosophilidae</taxon>
        <taxon>Drosophila</taxon>
        <taxon>Sophophora</taxon>
    </lineage>
</organism>
<name>NOS_DROME</name>
<accession>Q27571</accession>
<accession>A4V0K9</accession>
<accession>A4V0L0</accession>
<accession>Q4ABG3</accession>
<accession>Q4ABG4</accession>
<accession>Q4ABG5</accession>
<accession>Q4ABG6</accession>
<accession>Q4ABG7</accession>
<accession>Q7YU33</accession>
<accession>Q9U096</accession>
<accession>Q9VKP8</accession>
<protein>
    <recommendedName>
        <fullName evidence="11">Nitric oxide synthase</fullName>
        <shortName evidence="11">dNOS</shortName>
        <ecNumber evidence="9 13">1.14.13.39</ecNumber>
    </recommendedName>
</protein>
<feature type="chain" id="PRO_0000170951" description="Nitric oxide synthase">
    <location>
        <begin position="1"/>
        <end position="1349"/>
    </location>
</feature>
<feature type="domain" description="Flavodoxin-like" evidence="4">
    <location>
        <begin position="671"/>
        <end position="868"/>
    </location>
</feature>
<feature type="domain" description="FAD-binding FR-type" evidence="5">
    <location>
        <begin position="928"/>
        <end position="1167"/>
    </location>
</feature>
<feature type="region of interest" description="Disordered" evidence="6">
    <location>
        <begin position="23"/>
        <end position="195"/>
    </location>
</feature>
<feature type="region of interest" description="Calmodulin-binding" evidence="3">
    <location>
        <begin position="641"/>
        <end position="661"/>
    </location>
</feature>
<feature type="compositionally biased region" description="Low complexity" evidence="6">
    <location>
        <begin position="24"/>
        <end position="51"/>
    </location>
</feature>
<feature type="compositionally biased region" description="Low complexity" evidence="6">
    <location>
        <begin position="64"/>
        <end position="73"/>
    </location>
</feature>
<feature type="compositionally biased region" description="Gly residues" evidence="6">
    <location>
        <begin position="142"/>
        <end position="159"/>
    </location>
</feature>
<feature type="compositionally biased region" description="Polar residues" evidence="6">
    <location>
        <begin position="165"/>
        <end position="189"/>
    </location>
</feature>
<feature type="binding site" evidence="2">
    <location>
        <position position="250"/>
    </location>
    <ligand>
        <name>(6R)-L-erythro-5,6,7,8-tetrahydrobiopterin</name>
        <dbReference type="ChEBI" id="CHEBI:59560"/>
    </ligand>
</feature>
<feature type="binding site" description="axial binding residue" evidence="2">
    <location>
        <position position="328"/>
    </location>
    <ligand>
        <name>heme b</name>
        <dbReference type="ChEBI" id="CHEBI:60344"/>
    </ligand>
    <ligandPart>
        <name>Fe</name>
        <dbReference type="ChEBI" id="CHEBI:18248"/>
    </ligandPart>
</feature>
<feature type="binding site" evidence="2">
    <location>
        <position position="391"/>
    </location>
    <ligand>
        <name>L-arginine</name>
        <dbReference type="ChEBI" id="CHEBI:32682"/>
    </ligand>
</feature>
<feature type="binding site" evidence="2">
    <location>
        <position position="500"/>
    </location>
    <ligand>
        <name>L-arginine</name>
        <dbReference type="ChEBI" id="CHEBI:32682"/>
    </ligand>
</feature>
<feature type="binding site" evidence="2">
    <location>
        <position position="501"/>
    </location>
    <ligand>
        <name>L-arginine</name>
        <dbReference type="ChEBI" id="CHEBI:32682"/>
    </ligand>
</feature>
<feature type="binding site" evidence="2">
    <location>
        <position position="505"/>
    </location>
    <ligand>
        <name>L-arginine</name>
        <dbReference type="ChEBI" id="CHEBI:32682"/>
    </ligand>
</feature>
<feature type="binding site" evidence="2">
    <location>
        <position position="510"/>
    </location>
    <ligand>
        <name>L-arginine</name>
        <dbReference type="ChEBI" id="CHEBI:32682"/>
    </ligand>
</feature>
<feature type="binding site" evidence="2">
    <location>
        <position position="591"/>
    </location>
    <ligand>
        <name>(6R)-L-erythro-5,6,7,8-tetrahydrobiopterin</name>
        <dbReference type="ChEBI" id="CHEBI:59560"/>
    </ligand>
</feature>
<feature type="binding site" evidence="2">
    <location>
        <position position="604"/>
    </location>
    <ligand>
        <name>(6R)-L-erythro-5,6,7,8-tetrahydrobiopterin</name>
        <dbReference type="ChEBI" id="CHEBI:59560"/>
    </ligand>
</feature>
<feature type="binding site" evidence="2">
    <location>
        <position position="619"/>
    </location>
    <ligand>
        <name>heme b</name>
        <dbReference type="ChEBI" id="CHEBI:60344"/>
    </ligand>
</feature>
<feature type="binding site" evidence="4">
    <location>
        <begin position="814"/>
        <end position="845"/>
    </location>
    <ligand>
        <name>FMN</name>
        <dbReference type="ChEBI" id="CHEBI:58210"/>
    </ligand>
</feature>
<feature type="binding site" evidence="1">
    <location>
        <begin position="957"/>
        <end position="968"/>
    </location>
    <ligand>
        <name>FAD</name>
        <dbReference type="ChEBI" id="CHEBI:57692"/>
    </ligand>
</feature>
<feature type="binding site" evidence="1">
    <location>
        <begin position="1100"/>
        <end position="1110"/>
    </location>
    <ligand>
        <name>FAD</name>
        <dbReference type="ChEBI" id="CHEBI:57692"/>
    </ligand>
</feature>
<feature type="binding site" evidence="1">
    <location>
        <begin position="1175"/>
        <end position="1193"/>
    </location>
    <ligand>
        <name>NADP(+)</name>
        <dbReference type="ChEBI" id="CHEBI:58349"/>
    </ligand>
</feature>
<feature type="binding site" evidence="1">
    <location>
        <begin position="1273"/>
        <end position="1287"/>
    </location>
    <ligand>
        <name>NADP(+)</name>
        <dbReference type="ChEBI" id="CHEBI:58349"/>
    </ligand>
</feature>
<feature type="splice variant" id="VSP_003585" description="In isoform 3." evidence="12">
    <original>FMHLDDEGRSLLMR</original>
    <variation>RFFPARRPPVRAAL</variation>
    <location>
        <begin position="201"/>
        <end position="214"/>
    </location>
</feature>
<feature type="splice variant" id="VSP_003586" description="In isoform 3." evidence="12">
    <location>
        <begin position="215"/>
        <end position="1349"/>
    </location>
</feature>
<feature type="splice variant" id="VSP_003587" description="In isoform 2." evidence="11">
    <location>
        <begin position="417"/>
        <end position="521"/>
    </location>
</feature>
<feature type="splice variant" id="VSP_003590" description="In isoform 6." evidence="12">
    <original>IYCMSDYDISSIEHEALLIVVASTFGNGDPPENGELFSQELYAMRV</original>
    <variation>CPVGSVSSDPQDPVQLGLVVVLVSSTCVCKKHLPAAWQNKISCKHL</variation>
    <location>
        <begin position="701"/>
        <end position="746"/>
    </location>
</feature>
<feature type="splice variant" id="VSP_003588" description="In isoform 5." evidence="12">
    <original>IYCM</original>
    <variation>VSLT</variation>
    <location>
        <begin position="701"/>
        <end position="704"/>
    </location>
</feature>
<feature type="splice variant" id="VSP_003589" description="In isoform 5." evidence="12">
    <location>
        <begin position="705"/>
        <end position="1349"/>
    </location>
</feature>
<feature type="splice variant" id="VSP_003592" description="In isoform 4." evidence="12">
    <original>LFSQELYAMRVQESSEHGLQD</original>
    <variation>VSTPPRKDHTELINGLGPAAF</variation>
    <location>
        <begin position="736"/>
        <end position="756"/>
    </location>
</feature>
<feature type="splice variant" id="VSP_003591" description="In isoform 6." evidence="12">
    <location>
        <begin position="747"/>
        <end position="1349"/>
    </location>
</feature>
<feature type="splice variant" id="VSP_003593" description="In isoform 4." evidence="12">
    <location>
        <begin position="757"/>
        <end position="1349"/>
    </location>
</feature>
<feature type="splice variant" id="VSP_003594" description="In isoform 10." evidence="12">
    <location>
        <begin position="758"/>
        <end position="1291"/>
    </location>
</feature>
<feature type="sequence conflict" description="In Ref. 1; AAC46882." evidence="12" ref="1">
    <original>S</original>
    <variation>A</variation>
    <location>
        <position position="20"/>
    </location>
</feature>
<feature type="sequence conflict" description="In Ref. 1; AAC46882." evidence="12" ref="1">
    <original>Q</original>
    <variation>QQ</variation>
    <location>
        <position position="24"/>
    </location>
</feature>
<feature type="sequence conflict" description="In Ref. 1; AAC46882." evidence="12" ref="1">
    <original>S</original>
    <variation>L</variation>
    <location>
        <position position="105"/>
    </location>
</feature>
<feature type="sequence conflict" description="In Ref. 1; AAC46882." evidence="12" ref="1">
    <original>S</original>
    <variation>C</variation>
    <location>
        <position position="287"/>
    </location>
</feature>
<feature type="sequence conflict" description="In Ref. 2; AAF25682." evidence="12" ref="2">
    <original>T</original>
    <variation>S</variation>
    <location>
        <position position="373"/>
    </location>
</feature>
<feature type="sequence conflict" description="In Ref. 1; AAC46882 and 2; AAF25682." evidence="12" ref="1 2">
    <original>S</original>
    <variation>R</variation>
    <location>
        <position position="1197"/>
    </location>
</feature>
<keyword id="KW-0025">Alternative splicing</keyword>
<keyword id="KW-0112">Calmodulin-binding</keyword>
<keyword id="KW-0274">FAD</keyword>
<keyword id="KW-0285">Flavoprotein</keyword>
<keyword id="KW-0288">FMN</keyword>
<keyword id="KW-0349">Heme</keyword>
<keyword id="KW-0408">Iron</keyword>
<keyword id="KW-0479">Metal-binding</keyword>
<keyword id="KW-0521">NADP</keyword>
<keyword id="KW-0560">Oxidoreductase</keyword>
<keyword id="KW-1185">Reference proteome</keyword>
<comment type="function">
    <text evidence="7 8 9">Catalyzes the conversion of L-arginine to L-citrulline producing nitric oxide (NO) which is a messenger molecule with diverse functions throughout the body (PubMed:12804606, PubMed:7568075). Truncated isoforms (isoform 3-isoform 6) are able to form intracellular complexes with the full-length protein and serve as dominant negative inhibitors of the enzyme activity.</text>
</comment>
<comment type="catalytic activity">
    <reaction evidence="9 13">
        <text>2 L-arginine + 3 NADPH + 4 O2 + H(+) = 2 L-citrulline + 2 nitric oxide + 3 NADP(+) + 4 H2O</text>
        <dbReference type="Rhea" id="RHEA:19897"/>
        <dbReference type="ChEBI" id="CHEBI:15377"/>
        <dbReference type="ChEBI" id="CHEBI:15378"/>
        <dbReference type="ChEBI" id="CHEBI:15379"/>
        <dbReference type="ChEBI" id="CHEBI:16480"/>
        <dbReference type="ChEBI" id="CHEBI:32682"/>
        <dbReference type="ChEBI" id="CHEBI:57743"/>
        <dbReference type="ChEBI" id="CHEBI:57783"/>
        <dbReference type="ChEBI" id="CHEBI:58349"/>
        <dbReference type="EC" id="1.14.13.39"/>
    </reaction>
    <physiologicalReaction direction="left-to-right" evidence="9 13">
        <dbReference type="Rhea" id="RHEA:19898"/>
    </physiologicalReaction>
</comment>
<comment type="cofactor">
    <cofactor evidence="1">
        <name>heme b</name>
        <dbReference type="ChEBI" id="CHEBI:60344"/>
    </cofactor>
</comment>
<comment type="cofactor">
    <cofactor evidence="1">
        <name>FAD</name>
        <dbReference type="ChEBI" id="CHEBI:57692"/>
    </cofactor>
    <text evidence="1">Binds 1 FAD.</text>
</comment>
<comment type="cofactor">
    <cofactor evidence="1">
        <name>FMN</name>
        <dbReference type="ChEBI" id="CHEBI:58210"/>
    </cofactor>
    <text evidence="1">Binds 1 FMN.</text>
</comment>
<comment type="activity regulation">
    <text evidence="8 9">Stimulated by calcium/calmodulin.</text>
</comment>
<comment type="alternative products">
    <event type="alternative splicing"/>
    <isoform>
        <id>Q27571-1</id>
        <name evidence="12">1</name>
        <name evidence="14">A</name>
        <name>dNOS-1</name>
        <sequence type="displayed"/>
    </isoform>
    <isoform>
        <id>Q27571-2</id>
        <name evidence="12">2</name>
        <name evidence="10">dNOS-2</name>
        <sequence type="described" ref="VSP_003587"/>
    </isoform>
    <isoform>
        <id>Q27571-3</id>
        <name evidence="12">3</name>
        <name evidence="10">dNOS-3</name>
        <sequence type="described" ref="VSP_003585 VSP_003586"/>
    </isoform>
    <isoform>
        <id>Q27571-4</id>
        <name evidence="12">4</name>
        <name>B</name>
        <name evidence="10">dNOS-4</name>
        <name evidence="14">F</name>
        <sequence type="described" ref="VSP_003592 VSP_003593"/>
    </isoform>
    <isoform>
        <id>Q27571-5</id>
        <name evidence="12">5</name>
        <name evidence="10">dNOS-5</name>
        <sequence type="described" ref="VSP_003588 VSP_003589"/>
    </isoform>
    <isoform>
        <id>Q27571-6</id>
        <name evidence="12">6</name>
        <name evidence="10">dNOS-6</name>
        <sequence type="described" ref="VSP_003590 VSP_003591"/>
    </isoform>
    <isoform>
        <id>Q27571-7</id>
        <name evidence="12">10</name>
        <name evidence="10">dNOS-10</name>
        <sequence type="described" ref="VSP_003594"/>
    </isoform>
</comment>
<comment type="developmental stage">
    <text evidence="7">Isoform 3 is expressed in larvae only. Isoform 4, isoform 5, isoform 6 and isoform 10 are expressed throughout development from embryos to adults.</text>
</comment>
<comment type="similarity">
    <text evidence="12">Belongs to the NOS family.</text>
</comment>
<comment type="sequence caution" evidence="12">
    <conflict type="erroneous gene model prediction">
        <sequence resource="EMBL-CDS" id="AAZ66452"/>
    </conflict>
</comment>
<sequence>MSQHFTSIFENLRFVTIKRSTNAQQQQQQQQQQLQQQQQQLQQQKAQTQQQNSRKIKTQATPTLNGNGLLSGNPNGGGGDSSPSHEVDHPGGAQGAQAAGGLPSSSGTPLRHHKRASISTASPPIRERRGTNTSIVVELDGSGSGSGSGGGGVGVGQGAGCPPSGSCTASGKSSRELSPSPKNQQQPRKMSQDYRSRAGSFMHLDDEGRSLLMRKPMRLKNIEGRPEVYDTLHCKGREILSCSKATCTSSIMNIGNAAVEARKSDLILEHAKDFLEQYFTSIKRTSSTAHETRWKQVRQSIETTGHYQLTETELIYGAKLAWRNSSRCIGRIQWSKLQVFDCRYVTTTSGMFEAICNHIKYATNKGNLRSAITIFPQRTDAKHDYRIWNNQLISYAGYKQADGKIIGDPMNVEFTEVCTKLGWKSKGSEWDILPLVVSANGHDPDYFDYPPELILEVPLTHPKFEWFSDLGLRWYALPAVSSMLFDVGGIQFTATTFSGWYMSTEIGSRNLCDTNRRNMLETVALKMQLDTRTPTSLWKDKAVVEMNIAVLHSYQSRNVTIVDHHTASESFMKHFENESKLRNGCPADWIWIVPPLSGSITPVFHQEMALYYLKPSFEYQDPAWRTHVWKKGRGESKGKKPRRKFNFKQIARAVKFTSKLFGRALSKRIKATVLYATETGKSEQYAKQLCELLGHAFNAQIYCMSDYDISSIEHEALLIVVASTFGNGDPPENGELFSQELYAMRVQESSEHGLQDSSIGSSKSFMKASSRQEFMKLPLQQVKRIDRWDSLRGSTSDTFTEETFGPLSNVRFAVFALGSSAYPNFCAFGQYVDNILGELGGERLLRVAYGDEMCGQEQSFRKWAPEVFKLACETFCLDPEESLSDASLALQNDSLTVNTVRLVPSANKGSLDSSLSKYHNKKVHCCKAKAKPHNLTRLSEGAKTTMLLEICAPGLEYEPGDHVGIFPANRTELVDGLLNRLVGVDNPDEVLQLQLLKEKQTSNGIFKCWEPHDKIPPDTLRNLLARFFDLTTPPSRQLLTLLAGFCEDTADKERLELLVNDSSAYEDWRHWRLPHLLDVLEEFPSCRPPAPLLLAQLTPLQPRFYSISSSPRRVSDEIHLTVAIVKYRCEDGQGDERYGVCSNYLSGLRADDELFMFVRSALGFHLPSDRSRPIILIGPGTGIAPFRSFWQEFQVLSDLDPTAKLPKMWLFFGCRNRDVDLYAEEKAELQKDQILDRVFLALSREQAIPKTYVQDLIEQEFDSLYQLIVQERGHIYVCGDVTMAEHVYQTIRKCIAGKEQKSEAEVETFLLTLRDESRYHEDIFGITLRTAEIHTKSRATARIRMASQP</sequence>
<reference key="1">
    <citation type="journal article" date="1995" name="Proc. Natl. Acad. Sci. U.S.A.">
        <title>Molecular and biochemical characterization of dNOS: a Drosophila Ca2+/calmodulin-dependent nitric oxide synthase.</title>
        <authorList>
            <person name="Regulski M."/>
            <person name="Tully T."/>
        </authorList>
    </citation>
    <scope>NUCLEOTIDE SEQUENCE [MRNA] (ISOFORMS 1 AND 2)</scope>
    <scope>FUNCTION</scope>
    <scope>CATALYTIC ACTIVITY</scope>
    <scope>ACTIVITY REGULATION</scope>
    <source>
        <tissue>Head</tissue>
    </source>
</reference>
<reference key="2">
    <citation type="journal article" date="2001" name="J. Biol. Chem.">
        <title>The Drosophila nitric-oxide synthase gene (dNOS) encodes a family of proteins that can modulate NOS activity by acting as dominant negative regulators.</title>
        <authorList>
            <person name="Stasiv Y."/>
            <person name="Regulski M."/>
            <person name="Kuzin B."/>
            <person name="Tully T."/>
            <person name="Enikolopov G."/>
        </authorList>
    </citation>
    <scope>NUCLEOTIDE SEQUENCE [GENOMIC DNA]</scope>
    <scope>FUNCTION</scope>
    <scope>ALTERNATIVE SPLICING</scope>
    <scope>DEVELOPMENTAL STAGE</scope>
    <source>
        <tissue>Embryo</tissue>
        <tissue>Larva</tissue>
    </source>
</reference>
<reference key="3">
    <citation type="journal article" date="2000" name="Science">
        <title>The genome sequence of Drosophila melanogaster.</title>
        <authorList>
            <person name="Adams M.D."/>
            <person name="Celniker S.E."/>
            <person name="Holt R.A."/>
            <person name="Evans C.A."/>
            <person name="Gocayne J.D."/>
            <person name="Amanatides P.G."/>
            <person name="Scherer S.E."/>
            <person name="Li P.W."/>
            <person name="Hoskins R.A."/>
            <person name="Galle R.F."/>
            <person name="George R.A."/>
            <person name="Lewis S.E."/>
            <person name="Richards S."/>
            <person name="Ashburner M."/>
            <person name="Henderson S.N."/>
            <person name="Sutton G.G."/>
            <person name="Wortman J.R."/>
            <person name="Yandell M.D."/>
            <person name="Zhang Q."/>
            <person name="Chen L.X."/>
            <person name="Brandon R.C."/>
            <person name="Rogers Y.-H.C."/>
            <person name="Blazej R.G."/>
            <person name="Champe M."/>
            <person name="Pfeiffer B.D."/>
            <person name="Wan K.H."/>
            <person name="Doyle C."/>
            <person name="Baxter E.G."/>
            <person name="Helt G."/>
            <person name="Nelson C.R."/>
            <person name="Miklos G.L.G."/>
            <person name="Abril J.F."/>
            <person name="Agbayani A."/>
            <person name="An H.-J."/>
            <person name="Andrews-Pfannkoch C."/>
            <person name="Baldwin D."/>
            <person name="Ballew R.M."/>
            <person name="Basu A."/>
            <person name="Baxendale J."/>
            <person name="Bayraktaroglu L."/>
            <person name="Beasley E.M."/>
            <person name="Beeson K.Y."/>
            <person name="Benos P.V."/>
            <person name="Berman B.P."/>
            <person name="Bhandari D."/>
            <person name="Bolshakov S."/>
            <person name="Borkova D."/>
            <person name="Botchan M.R."/>
            <person name="Bouck J."/>
            <person name="Brokstein P."/>
            <person name="Brottier P."/>
            <person name="Burtis K.C."/>
            <person name="Busam D.A."/>
            <person name="Butler H."/>
            <person name="Cadieu E."/>
            <person name="Center A."/>
            <person name="Chandra I."/>
            <person name="Cherry J.M."/>
            <person name="Cawley S."/>
            <person name="Dahlke C."/>
            <person name="Davenport L.B."/>
            <person name="Davies P."/>
            <person name="de Pablos B."/>
            <person name="Delcher A."/>
            <person name="Deng Z."/>
            <person name="Mays A.D."/>
            <person name="Dew I."/>
            <person name="Dietz S.M."/>
            <person name="Dodson K."/>
            <person name="Doup L.E."/>
            <person name="Downes M."/>
            <person name="Dugan-Rocha S."/>
            <person name="Dunkov B.C."/>
            <person name="Dunn P."/>
            <person name="Durbin K.J."/>
            <person name="Evangelista C.C."/>
            <person name="Ferraz C."/>
            <person name="Ferriera S."/>
            <person name="Fleischmann W."/>
            <person name="Fosler C."/>
            <person name="Gabrielian A.E."/>
            <person name="Garg N.S."/>
            <person name="Gelbart W.M."/>
            <person name="Glasser K."/>
            <person name="Glodek A."/>
            <person name="Gong F."/>
            <person name="Gorrell J.H."/>
            <person name="Gu Z."/>
            <person name="Guan P."/>
            <person name="Harris M."/>
            <person name="Harris N.L."/>
            <person name="Harvey D.A."/>
            <person name="Heiman T.J."/>
            <person name="Hernandez J.R."/>
            <person name="Houck J."/>
            <person name="Hostin D."/>
            <person name="Houston K.A."/>
            <person name="Howland T.J."/>
            <person name="Wei M.-H."/>
            <person name="Ibegwam C."/>
            <person name="Jalali M."/>
            <person name="Kalush F."/>
            <person name="Karpen G.H."/>
            <person name="Ke Z."/>
            <person name="Kennison J.A."/>
            <person name="Ketchum K.A."/>
            <person name="Kimmel B.E."/>
            <person name="Kodira C.D."/>
            <person name="Kraft C.L."/>
            <person name="Kravitz S."/>
            <person name="Kulp D."/>
            <person name="Lai Z."/>
            <person name="Lasko P."/>
            <person name="Lei Y."/>
            <person name="Levitsky A.A."/>
            <person name="Li J.H."/>
            <person name="Li Z."/>
            <person name="Liang Y."/>
            <person name="Lin X."/>
            <person name="Liu X."/>
            <person name="Mattei B."/>
            <person name="McIntosh T.C."/>
            <person name="McLeod M.P."/>
            <person name="McPherson D."/>
            <person name="Merkulov G."/>
            <person name="Milshina N.V."/>
            <person name="Mobarry C."/>
            <person name="Morris J."/>
            <person name="Moshrefi A."/>
            <person name="Mount S.M."/>
            <person name="Moy M."/>
            <person name="Murphy B."/>
            <person name="Murphy L."/>
            <person name="Muzny D.M."/>
            <person name="Nelson D.L."/>
            <person name="Nelson D.R."/>
            <person name="Nelson K.A."/>
            <person name="Nixon K."/>
            <person name="Nusskern D.R."/>
            <person name="Pacleb J.M."/>
            <person name="Palazzolo M."/>
            <person name="Pittman G.S."/>
            <person name="Pan S."/>
            <person name="Pollard J."/>
            <person name="Puri V."/>
            <person name="Reese M.G."/>
            <person name="Reinert K."/>
            <person name="Remington K."/>
            <person name="Saunders R.D.C."/>
            <person name="Scheeler F."/>
            <person name="Shen H."/>
            <person name="Shue B.C."/>
            <person name="Siden-Kiamos I."/>
            <person name="Simpson M."/>
            <person name="Skupski M.P."/>
            <person name="Smith T.J."/>
            <person name="Spier E."/>
            <person name="Spradling A.C."/>
            <person name="Stapleton M."/>
            <person name="Strong R."/>
            <person name="Sun E."/>
            <person name="Svirskas R."/>
            <person name="Tector C."/>
            <person name="Turner R."/>
            <person name="Venter E."/>
            <person name="Wang A.H."/>
            <person name="Wang X."/>
            <person name="Wang Z.-Y."/>
            <person name="Wassarman D.A."/>
            <person name="Weinstock G.M."/>
            <person name="Weissenbach J."/>
            <person name="Williams S.M."/>
            <person name="Woodage T."/>
            <person name="Worley K.C."/>
            <person name="Wu D."/>
            <person name="Yang S."/>
            <person name="Yao Q.A."/>
            <person name="Ye J."/>
            <person name="Yeh R.-F."/>
            <person name="Zaveri J.S."/>
            <person name="Zhan M."/>
            <person name="Zhang G."/>
            <person name="Zhao Q."/>
            <person name="Zheng L."/>
            <person name="Zheng X.H."/>
            <person name="Zhong F.N."/>
            <person name="Zhong W."/>
            <person name="Zhou X."/>
            <person name="Zhu S.C."/>
            <person name="Zhu X."/>
            <person name="Smith H.O."/>
            <person name="Gibbs R.A."/>
            <person name="Myers E.W."/>
            <person name="Rubin G.M."/>
            <person name="Venter J.C."/>
        </authorList>
    </citation>
    <scope>NUCLEOTIDE SEQUENCE [LARGE SCALE GENOMIC DNA]</scope>
    <source>
        <strain>Berkeley</strain>
    </source>
</reference>
<reference key="4">
    <citation type="journal article" date="2002" name="Genome Biol.">
        <title>Annotation of the Drosophila melanogaster euchromatic genome: a systematic review.</title>
        <authorList>
            <person name="Misra S."/>
            <person name="Crosby M.A."/>
            <person name="Mungall C.J."/>
            <person name="Matthews B.B."/>
            <person name="Campbell K.S."/>
            <person name="Hradecky P."/>
            <person name="Huang Y."/>
            <person name="Kaminker J.S."/>
            <person name="Millburn G.H."/>
            <person name="Prochnik S.E."/>
            <person name="Smith C.D."/>
            <person name="Tupy J.L."/>
            <person name="Whitfield E.J."/>
            <person name="Bayraktaroglu L."/>
            <person name="Berman B.P."/>
            <person name="Bettencourt B.R."/>
            <person name="Celniker S.E."/>
            <person name="de Grey A.D.N.J."/>
            <person name="Drysdale R.A."/>
            <person name="Harris N.L."/>
            <person name="Richter J."/>
            <person name="Russo S."/>
            <person name="Schroeder A.J."/>
            <person name="Shu S.Q."/>
            <person name="Stapleton M."/>
            <person name="Yamada C."/>
            <person name="Ashburner M."/>
            <person name="Gelbart W.M."/>
            <person name="Rubin G.M."/>
            <person name="Lewis S.E."/>
        </authorList>
    </citation>
    <scope>GENOME REANNOTATION</scope>
    <scope>ALTERNATIVE SPLICING</scope>
    <source>
        <strain>Berkeley</strain>
    </source>
</reference>
<reference key="5">
    <citation type="submission" date="2003-08" db="EMBL/GenBank/DDBJ databases">
        <authorList>
            <person name="Stapleton M."/>
            <person name="Brokstein P."/>
            <person name="Hong L."/>
            <person name="Agbayani A."/>
            <person name="Carlson J.W."/>
            <person name="Champe M."/>
            <person name="Chavez C."/>
            <person name="Dorsett V."/>
            <person name="Dresnek D."/>
            <person name="Farfan D."/>
            <person name="Frise E."/>
            <person name="George R.A."/>
            <person name="Gonzalez M."/>
            <person name="Guarin H."/>
            <person name="Kronmiller B."/>
            <person name="Li P.W."/>
            <person name="Liao G."/>
            <person name="Miranda A."/>
            <person name="Mungall C.J."/>
            <person name="Nunoo J."/>
            <person name="Pacleb J.M."/>
            <person name="Paragas V."/>
            <person name="Park S."/>
            <person name="Patel S."/>
            <person name="Phouanenavong S."/>
            <person name="Wan K.H."/>
            <person name="Yu C."/>
            <person name="Lewis S.E."/>
            <person name="Rubin G.M."/>
            <person name="Celniker S.E."/>
        </authorList>
    </citation>
    <scope>NUCLEOTIDE SEQUENCE [LARGE SCALE MRNA] (ISOFORM 1)</scope>
    <source>
        <strain>Berkeley</strain>
        <tissue>Embryo</tissue>
    </source>
</reference>
<reference key="6">
    <citation type="journal article" date="2003" name="Biochem. Biophys. Res. Commun.">
        <title>Characterization of Drosophila nitric oxide synthase: a biochemical study.</title>
        <authorList>
            <person name="Sengupta R."/>
            <person name="Sahoo R."/>
            <person name="Mukherjee S."/>
            <person name="Regulski M."/>
            <person name="Tully T."/>
            <person name="Stuehr D.J."/>
            <person name="Ghosh S."/>
        </authorList>
    </citation>
    <scope>FUNCTION</scope>
    <scope>CATALYTIC ACTIVITY</scope>
    <scope>ACTIVITY REGULATION</scope>
</reference>